<evidence type="ECO:0000255" key="1">
    <source>
        <dbReference type="HAMAP-Rule" id="MF_01584"/>
    </source>
</evidence>
<keyword id="KW-1185">Reference proteome</keyword>
<dbReference type="EMBL" id="AE006468">
    <property type="protein sequence ID" value="AAL20098.1"/>
    <property type="molecule type" value="Genomic_DNA"/>
</dbReference>
<dbReference type="RefSeq" id="NP_460139.1">
    <property type="nucleotide sequence ID" value="NC_003197.2"/>
</dbReference>
<dbReference type="RefSeq" id="WP_000873047.1">
    <property type="nucleotide sequence ID" value="NC_003197.2"/>
</dbReference>
<dbReference type="SMR" id="Q7CQR2"/>
<dbReference type="STRING" id="99287.STM1168"/>
<dbReference type="PaxDb" id="99287-STM1168"/>
<dbReference type="GeneID" id="1252686"/>
<dbReference type="KEGG" id="stm:STM1168"/>
<dbReference type="PATRIC" id="fig|99287.12.peg.1236"/>
<dbReference type="HOGENOM" id="CLU_057831_2_0_6"/>
<dbReference type="OMA" id="CNQKSSR"/>
<dbReference type="PhylomeDB" id="Q7CQR2"/>
<dbReference type="BioCyc" id="SENT99287:STM1168-MONOMER"/>
<dbReference type="Proteomes" id="UP000001014">
    <property type="component" value="Chromosome"/>
</dbReference>
<dbReference type="FunFam" id="1.10.10.10:FF:000196">
    <property type="entry name" value="UPF0502 protein YceH"/>
    <property type="match status" value="1"/>
</dbReference>
<dbReference type="Gene3D" id="1.10.10.10">
    <property type="entry name" value="Winged helix-like DNA-binding domain superfamily/Winged helix DNA-binding domain"/>
    <property type="match status" value="2"/>
</dbReference>
<dbReference type="HAMAP" id="MF_01584">
    <property type="entry name" value="UPF0502"/>
    <property type="match status" value="1"/>
</dbReference>
<dbReference type="InterPro" id="IPR007432">
    <property type="entry name" value="DUF480"/>
</dbReference>
<dbReference type="InterPro" id="IPR036388">
    <property type="entry name" value="WH-like_DNA-bd_sf"/>
</dbReference>
<dbReference type="InterPro" id="IPR036390">
    <property type="entry name" value="WH_DNA-bd_sf"/>
</dbReference>
<dbReference type="NCBIfam" id="NF008413">
    <property type="entry name" value="PRK11239.1"/>
    <property type="match status" value="1"/>
</dbReference>
<dbReference type="PANTHER" id="PTHR38768">
    <property type="entry name" value="UPF0502 PROTEIN YCEH"/>
    <property type="match status" value="1"/>
</dbReference>
<dbReference type="PANTHER" id="PTHR38768:SF1">
    <property type="entry name" value="UPF0502 PROTEIN YCEH"/>
    <property type="match status" value="1"/>
</dbReference>
<dbReference type="Pfam" id="PF04337">
    <property type="entry name" value="DUF480"/>
    <property type="match status" value="1"/>
</dbReference>
<dbReference type="SUPFAM" id="SSF46785">
    <property type="entry name" value="Winged helix' DNA-binding domain"/>
    <property type="match status" value="2"/>
</dbReference>
<reference key="1">
    <citation type="journal article" date="2001" name="Nature">
        <title>Complete genome sequence of Salmonella enterica serovar Typhimurium LT2.</title>
        <authorList>
            <person name="McClelland M."/>
            <person name="Sanderson K.E."/>
            <person name="Spieth J."/>
            <person name="Clifton S.W."/>
            <person name="Latreille P."/>
            <person name="Courtney L."/>
            <person name="Porwollik S."/>
            <person name="Ali J."/>
            <person name="Dante M."/>
            <person name="Du F."/>
            <person name="Hou S."/>
            <person name="Layman D."/>
            <person name="Leonard S."/>
            <person name="Nguyen C."/>
            <person name="Scott K."/>
            <person name="Holmes A."/>
            <person name="Grewal N."/>
            <person name="Mulvaney E."/>
            <person name="Ryan E."/>
            <person name="Sun H."/>
            <person name="Florea L."/>
            <person name="Miller W."/>
            <person name="Stoneking T."/>
            <person name="Nhan M."/>
            <person name="Waterston R."/>
            <person name="Wilson R.K."/>
        </authorList>
    </citation>
    <scope>NUCLEOTIDE SEQUENCE [LARGE SCALE GENOMIC DNA]</scope>
    <source>
        <strain>LT2 / SGSC1412 / ATCC 700720</strain>
    </source>
</reference>
<sequence>MKYELTATEARVIGCLLEKQVTTPEQYPLSVNGVVTACNQKTNREPVMNLTEQEVQEQLDNLVKRHFLRTVSGFGNRVTKYEQRFCNSEFGDLKLSAAEVALVTTLLLRGAQTPGELRSRASRMHEFSDMAEVESTLERLASREDGPYVVRLAREPGKRESRYMHLFCGDVDELSLQTSAPESASGDLQSRVEALESEVAELKQRLDSLLAHLGE</sequence>
<accession>Q7CQR2</accession>
<organism>
    <name type="scientific">Salmonella typhimurium (strain LT2 / SGSC1412 / ATCC 700720)</name>
    <dbReference type="NCBI Taxonomy" id="99287"/>
    <lineage>
        <taxon>Bacteria</taxon>
        <taxon>Pseudomonadati</taxon>
        <taxon>Pseudomonadota</taxon>
        <taxon>Gammaproteobacteria</taxon>
        <taxon>Enterobacterales</taxon>
        <taxon>Enterobacteriaceae</taxon>
        <taxon>Salmonella</taxon>
    </lineage>
</organism>
<feature type="chain" id="PRO_0000309422" description="UPF0502 protein YceH">
    <location>
        <begin position="1"/>
        <end position="215"/>
    </location>
</feature>
<proteinExistence type="inferred from homology"/>
<protein>
    <recommendedName>
        <fullName evidence="1">UPF0502 protein YceH</fullName>
    </recommendedName>
</protein>
<gene>
    <name evidence="1" type="primary">yceH</name>
    <name type="ordered locus">STM1168</name>
</gene>
<name>YCEH_SALTY</name>
<comment type="similarity">
    <text evidence="1">Belongs to the UPF0502 family.</text>
</comment>